<name>CHEB2_SHEON</name>
<comment type="function">
    <text evidence="1">Involved in chemotaxis. Part of a chemotaxis signal transduction system that modulates chemotaxis in response to various stimuli. Catalyzes the demethylation of specific methylglutamate residues introduced into the chemoreceptors (methyl-accepting chemotaxis proteins or MCP) by CheR. Also mediates the irreversible deamidation of specific glutamine residues to glutamic acid.</text>
</comment>
<comment type="catalytic activity">
    <reaction evidence="1">
        <text>[protein]-L-glutamate 5-O-methyl ester + H2O = L-glutamyl-[protein] + methanol + H(+)</text>
        <dbReference type="Rhea" id="RHEA:23236"/>
        <dbReference type="Rhea" id="RHEA-COMP:10208"/>
        <dbReference type="Rhea" id="RHEA-COMP:10311"/>
        <dbReference type="ChEBI" id="CHEBI:15377"/>
        <dbReference type="ChEBI" id="CHEBI:15378"/>
        <dbReference type="ChEBI" id="CHEBI:17790"/>
        <dbReference type="ChEBI" id="CHEBI:29973"/>
        <dbReference type="ChEBI" id="CHEBI:82795"/>
        <dbReference type="EC" id="3.1.1.61"/>
    </reaction>
</comment>
<comment type="catalytic activity">
    <reaction evidence="1">
        <text>L-glutaminyl-[protein] + H2O = L-glutamyl-[protein] + NH4(+)</text>
        <dbReference type="Rhea" id="RHEA:16441"/>
        <dbReference type="Rhea" id="RHEA-COMP:10207"/>
        <dbReference type="Rhea" id="RHEA-COMP:10208"/>
        <dbReference type="ChEBI" id="CHEBI:15377"/>
        <dbReference type="ChEBI" id="CHEBI:28938"/>
        <dbReference type="ChEBI" id="CHEBI:29973"/>
        <dbReference type="ChEBI" id="CHEBI:30011"/>
        <dbReference type="EC" id="3.5.1.44"/>
    </reaction>
</comment>
<comment type="subcellular location">
    <subcellularLocation>
        <location evidence="1">Cytoplasm</location>
    </subcellularLocation>
</comment>
<comment type="domain">
    <text evidence="1">Contains a C-terminal catalytic domain, and an N-terminal region which modulates catalytic activity.</text>
</comment>
<comment type="PTM">
    <text evidence="1">Phosphorylated by CheA. Phosphorylation of the N-terminal regulatory domain activates the methylesterase activity.</text>
</comment>
<comment type="similarity">
    <text evidence="1">Belongs to the CheB family.</text>
</comment>
<accession>Q8EF61</accession>
<reference key="1">
    <citation type="journal article" date="2002" name="Nat. Biotechnol.">
        <title>Genome sequence of the dissimilatory metal ion-reducing bacterium Shewanella oneidensis.</title>
        <authorList>
            <person name="Heidelberg J.F."/>
            <person name="Paulsen I.T."/>
            <person name="Nelson K.E."/>
            <person name="Gaidos E.J."/>
            <person name="Nelson W.C."/>
            <person name="Read T.D."/>
            <person name="Eisen J.A."/>
            <person name="Seshadri R."/>
            <person name="Ward N.L."/>
            <person name="Methe B.A."/>
            <person name="Clayton R.A."/>
            <person name="Meyer T."/>
            <person name="Tsapin A."/>
            <person name="Scott J."/>
            <person name="Beanan M.J."/>
            <person name="Brinkac L.M."/>
            <person name="Daugherty S.C."/>
            <person name="DeBoy R.T."/>
            <person name="Dodson R.J."/>
            <person name="Durkin A.S."/>
            <person name="Haft D.H."/>
            <person name="Kolonay J.F."/>
            <person name="Madupu R."/>
            <person name="Peterson J.D."/>
            <person name="Umayam L.A."/>
            <person name="White O."/>
            <person name="Wolf A.M."/>
            <person name="Vamathevan J.J."/>
            <person name="Weidman J.F."/>
            <person name="Impraim M."/>
            <person name="Lee K."/>
            <person name="Berry K.J."/>
            <person name="Lee C."/>
            <person name="Mueller J."/>
            <person name="Khouri H.M."/>
            <person name="Gill J."/>
            <person name="Utterback T.R."/>
            <person name="McDonald L.A."/>
            <person name="Feldblyum T.V."/>
            <person name="Smith H.O."/>
            <person name="Venter J.C."/>
            <person name="Nealson K.H."/>
            <person name="Fraser C.M."/>
        </authorList>
    </citation>
    <scope>NUCLEOTIDE SEQUENCE [LARGE SCALE GENOMIC DNA]</scope>
    <source>
        <strain>ATCC 700550 / JCM 31522 / CIP 106686 / LMG 19005 / NCIMB 14063 / MR-1</strain>
    </source>
</reference>
<evidence type="ECO:0000255" key="1">
    <source>
        <dbReference type="HAMAP-Rule" id="MF_00099"/>
    </source>
</evidence>
<dbReference type="EC" id="3.1.1.61" evidence="1"/>
<dbReference type="EC" id="3.5.1.44" evidence="1"/>
<dbReference type="EMBL" id="AE014299">
    <property type="protein sequence ID" value="AAN55173.1"/>
    <property type="molecule type" value="Genomic_DNA"/>
</dbReference>
<dbReference type="RefSeq" id="NP_717729.1">
    <property type="nucleotide sequence ID" value="NC_004347.2"/>
</dbReference>
<dbReference type="RefSeq" id="WP_011072189.1">
    <property type="nucleotide sequence ID" value="NC_004347.2"/>
</dbReference>
<dbReference type="SMR" id="Q8EF61"/>
<dbReference type="STRING" id="211586.SO_2126"/>
<dbReference type="PaxDb" id="211586-SO_2126"/>
<dbReference type="KEGG" id="son:SO_2126"/>
<dbReference type="PATRIC" id="fig|211586.12.peg.2042"/>
<dbReference type="eggNOG" id="COG2201">
    <property type="taxonomic scope" value="Bacteria"/>
</dbReference>
<dbReference type="HOGENOM" id="CLU_000445_51_0_6"/>
<dbReference type="OrthoDB" id="9793421at2"/>
<dbReference type="PhylomeDB" id="Q8EF61"/>
<dbReference type="BioCyc" id="SONE211586:G1GMP-1956-MONOMER"/>
<dbReference type="Proteomes" id="UP000008186">
    <property type="component" value="Chromosome"/>
</dbReference>
<dbReference type="GO" id="GO:0005737">
    <property type="term" value="C:cytoplasm"/>
    <property type="evidence" value="ECO:0007669"/>
    <property type="project" value="UniProtKB-SubCell"/>
</dbReference>
<dbReference type="GO" id="GO:0000156">
    <property type="term" value="F:phosphorelay response regulator activity"/>
    <property type="evidence" value="ECO:0007669"/>
    <property type="project" value="InterPro"/>
</dbReference>
<dbReference type="GO" id="GO:0008984">
    <property type="term" value="F:protein-glutamate methylesterase activity"/>
    <property type="evidence" value="ECO:0007669"/>
    <property type="project" value="UniProtKB-UniRule"/>
</dbReference>
<dbReference type="GO" id="GO:0050568">
    <property type="term" value="F:protein-glutamine glutaminase activity"/>
    <property type="evidence" value="ECO:0007669"/>
    <property type="project" value="UniProtKB-UniRule"/>
</dbReference>
<dbReference type="GO" id="GO:0006935">
    <property type="term" value="P:chemotaxis"/>
    <property type="evidence" value="ECO:0007669"/>
    <property type="project" value="UniProtKB-UniRule"/>
</dbReference>
<dbReference type="CDD" id="cd16432">
    <property type="entry name" value="CheB_Rec"/>
    <property type="match status" value="1"/>
</dbReference>
<dbReference type="CDD" id="cd17541">
    <property type="entry name" value="REC_CheB-like"/>
    <property type="match status" value="1"/>
</dbReference>
<dbReference type="Gene3D" id="3.40.50.2300">
    <property type="match status" value="1"/>
</dbReference>
<dbReference type="Gene3D" id="3.40.50.180">
    <property type="entry name" value="Methylesterase CheB, C-terminal domain"/>
    <property type="match status" value="1"/>
</dbReference>
<dbReference type="HAMAP" id="MF_00099">
    <property type="entry name" value="CheB_chemtxs"/>
    <property type="match status" value="1"/>
</dbReference>
<dbReference type="InterPro" id="IPR008248">
    <property type="entry name" value="CheB-like"/>
</dbReference>
<dbReference type="InterPro" id="IPR035909">
    <property type="entry name" value="CheB_C"/>
</dbReference>
<dbReference type="InterPro" id="IPR011006">
    <property type="entry name" value="CheY-like_superfamily"/>
</dbReference>
<dbReference type="InterPro" id="IPR000673">
    <property type="entry name" value="Sig_transdc_resp-reg_Me-estase"/>
</dbReference>
<dbReference type="InterPro" id="IPR001789">
    <property type="entry name" value="Sig_transdc_resp-reg_receiver"/>
</dbReference>
<dbReference type="NCBIfam" id="NF001965">
    <property type="entry name" value="PRK00742.1"/>
    <property type="match status" value="1"/>
</dbReference>
<dbReference type="NCBIfam" id="NF009206">
    <property type="entry name" value="PRK12555.1"/>
    <property type="match status" value="1"/>
</dbReference>
<dbReference type="PANTHER" id="PTHR42872">
    <property type="entry name" value="PROTEIN-GLUTAMATE METHYLESTERASE/PROTEIN-GLUTAMINE GLUTAMINASE"/>
    <property type="match status" value="1"/>
</dbReference>
<dbReference type="PANTHER" id="PTHR42872:SF6">
    <property type="entry name" value="PROTEIN-GLUTAMATE METHYLESTERASE_PROTEIN-GLUTAMINE GLUTAMINASE"/>
    <property type="match status" value="1"/>
</dbReference>
<dbReference type="Pfam" id="PF01339">
    <property type="entry name" value="CheB_methylest"/>
    <property type="match status" value="1"/>
</dbReference>
<dbReference type="Pfam" id="PF00072">
    <property type="entry name" value="Response_reg"/>
    <property type="match status" value="1"/>
</dbReference>
<dbReference type="PIRSF" id="PIRSF000876">
    <property type="entry name" value="RR_chemtxs_CheB"/>
    <property type="match status" value="1"/>
</dbReference>
<dbReference type="SMART" id="SM00448">
    <property type="entry name" value="REC"/>
    <property type="match status" value="1"/>
</dbReference>
<dbReference type="SUPFAM" id="SSF52172">
    <property type="entry name" value="CheY-like"/>
    <property type="match status" value="1"/>
</dbReference>
<dbReference type="SUPFAM" id="SSF52738">
    <property type="entry name" value="Methylesterase CheB, C-terminal domain"/>
    <property type="match status" value="1"/>
</dbReference>
<dbReference type="PROSITE" id="PS50122">
    <property type="entry name" value="CHEB"/>
    <property type="match status" value="1"/>
</dbReference>
<dbReference type="PROSITE" id="PS50110">
    <property type="entry name" value="RESPONSE_REGULATORY"/>
    <property type="match status" value="1"/>
</dbReference>
<sequence>MAIKVLVVDDSTLIRSLLGKMIESDPELSLVGMAADAYMAKDMVNQFRPDVITLDIEMPKVDGLTFLDRLMKARPTAVVMISALTEEGADATFNALALGAVDFIPKPKLDSPQGFNEYQDLILEKIKSAAKAKLLKALPSASTPVKSSIKPALSQRTVNTQLVAIGASTGGTEAILALLKQFPAVMPPIVITQHMPAGFTCTFADRLNKLTRFNVKQAEEGERLLPCYAYVAPGDQHLEIIKVGGSFKAKLSQGDKVSGHRPSVDVLFHSVAQYAGENATAVILTGMGKDGADGIEAIDMQGGKTFAQGEQSCVVFGMPKEAIKRGAIHHVVELPQLGDKLLQYLASVNRD</sequence>
<protein>
    <recommendedName>
        <fullName evidence="1">Protein-glutamate methylesterase/protein-glutamine glutaminase 2</fullName>
        <ecNumber evidence="1">3.1.1.61</ecNumber>
        <ecNumber evidence="1">3.5.1.44</ecNumber>
    </recommendedName>
</protein>
<organism>
    <name type="scientific">Shewanella oneidensis (strain ATCC 700550 / JCM 31522 / CIP 106686 / LMG 19005 / NCIMB 14063 / MR-1)</name>
    <dbReference type="NCBI Taxonomy" id="211586"/>
    <lineage>
        <taxon>Bacteria</taxon>
        <taxon>Pseudomonadati</taxon>
        <taxon>Pseudomonadota</taxon>
        <taxon>Gammaproteobacteria</taxon>
        <taxon>Alteromonadales</taxon>
        <taxon>Shewanellaceae</taxon>
        <taxon>Shewanella</taxon>
    </lineage>
</organism>
<feature type="chain" id="PRO_0000158029" description="Protein-glutamate methylesterase/protein-glutamine glutaminase 2">
    <location>
        <begin position="1"/>
        <end position="351"/>
    </location>
</feature>
<feature type="domain" description="Response regulatory" evidence="1">
    <location>
        <begin position="4"/>
        <end position="121"/>
    </location>
</feature>
<feature type="domain" description="CheB-type methylesterase" evidence="1">
    <location>
        <begin position="156"/>
        <end position="348"/>
    </location>
</feature>
<feature type="active site" evidence="1">
    <location>
        <position position="168"/>
    </location>
</feature>
<feature type="active site" evidence="1">
    <location>
        <position position="194"/>
    </location>
</feature>
<feature type="active site" evidence="1">
    <location>
        <position position="290"/>
    </location>
</feature>
<feature type="modified residue" description="4-aspartylphosphate" evidence="1">
    <location>
        <position position="55"/>
    </location>
</feature>
<gene>
    <name evidence="1" type="primary">cheB2</name>
    <name type="ordered locus">SO_2126</name>
</gene>
<keyword id="KW-0145">Chemotaxis</keyword>
<keyword id="KW-0963">Cytoplasm</keyword>
<keyword id="KW-0378">Hydrolase</keyword>
<keyword id="KW-0597">Phosphoprotein</keyword>
<keyword id="KW-1185">Reference proteome</keyword>
<proteinExistence type="inferred from homology"/>